<protein>
    <recommendedName>
        <fullName evidence="1">Tetraacyldisaccharide 4'-kinase</fullName>
        <ecNumber evidence="1">2.7.1.130</ecNumber>
    </recommendedName>
    <alternativeName>
        <fullName evidence="1">Lipid A 4'-kinase</fullName>
    </alternativeName>
</protein>
<proteinExistence type="inferred from homology"/>
<comment type="function">
    <text evidence="1">Transfers the gamma-phosphate of ATP to the 4'-position of a tetraacyldisaccharide 1-phosphate intermediate (termed DS-1-P) to form tetraacyldisaccharide 1,4'-bis-phosphate (lipid IVA).</text>
</comment>
<comment type="catalytic activity">
    <reaction evidence="1">
        <text>a lipid A disaccharide + ATP = a lipid IVA + ADP + H(+)</text>
        <dbReference type="Rhea" id="RHEA:67840"/>
        <dbReference type="ChEBI" id="CHEBI:15378"/>
        <dbReference type="ChEBI" id="CHEBI:30616"/>
        <dbReference type="ChEBI" id="CHEBI:176343"/>
        <dbReference type="ChEBI" id="CHEBI:176425"/>
        <dbReference type="ChEBI" id="CHEBI:456216"/>
        <dbReference type="EC" id="2.7.1.130"/>
    </reaction>
</comment>
<comment type="pathway">
    <text evidence="1">Glycolipid biosynthesis; lipid IV(A) biosynthesis; lipid IV(A) from (3R)-3-hydroxytetradecanoyl-[acyl-carrier-protein] and UDP-N-acetyl-alpha-D-glucosamine: step 6/6.</text>
</comment>
<comment type="similarity">
    <text evidence="1">Belongs to the LpxK family.</text>
</comment>
<sequence>MALQRSNLEEFLTQTWAQRGLAACMLLPVSAVFGGLSALRRAAYRLGLSKSERLPVPVVVVGNIFVGGTGKTPLTIWLVHVLRQAGYTPGVISRGYGVHNDVPQAVTPQSLAQEVGDEPLLIAYRAECPVMVGRDRVAVATALLAAHPEVDVLLSDDGLQHYRMARDVEIVLFDGRGAGNGWLLPAGPLREPVSRRRDFTVLNGAADAPGLPPDAIRMQLVGMTAEKLNDRSQTSALSSFAASDGKHAPTILAAAGIGNPGRFFGLLRSAGLQFEEMALPDHYDFADNPFAHVKADVILITEKDAVKCRQNEGLRNDTRLWVVPVTAQLDGALAEKIVEKLRGRSIA</sequence>
<name>LPXK_JANMA</name>
<organism>
    <name type="scientific">Janthinobacterium sp. (strain Marseille)</name>
    <name type="common">Minibacterium massiliensis</name>
    <dbReference type="NCBI Taxonomy" id="375286"/>
    <lineage>
        <taxon>Bacteria</taxon>
        <taxon>Pseudomonadati</taxon>
        <taxon>Pseudomonadota</taxon>
        <taxon>Betaproteobacteria</taxon>
        <taxon>Burkholderiales</taxon>
        <taxon>Oxalobacteraceae</taxon>
        <taxon>Janthinobacterium</taxon>
    </lineage>
</organism>
<reference key="1">
    <citation type="journal article" date="2007" name="PLoS Genet.">
        <title>Genome analysis of Minibacterium massiliensis highlights the convergent evolution of water-living bacteria.</title>
        <authorList>
            <person name="Audic S."/>
            <person name="Robert C."/>
            <person name="Campagna B."/>
            <person name="Parinello H."/>
            <person name="Claverie J.-M."/>
            <person name="Raoult D."/>
            <person name="Drancourt M."/>
        </authorList>
    </citation>
    <scope>NUCLEOTIDE SEQUENCE [LARGE SCALE GENOMIC DNA]</scope>
    <source>
        <strain>Marseille</strain>
    </source>
</reference>
<feature type="chain" id="PRO_0000340838" description="Tetraacyldisaccharide 4'-kinase">
    <location>
        <begin position="1"/>
        <end position="347"/>
    </location>
</feature>
<feature type="binding site" evidence="1">
    <location>
        <begin position="65"/>
        <end position="72"/>
    </location>
    <ligand>
        <name>ATP</name>
        <dbReference type="ChEBI" id="CHEBI:30616"/>
    </ligand>
</feature>
<gene>
    <name evidence="1" type="primary">lpxK</name>
    <name type="ordered locus">mma_2579</name>
</gene>
<accession>A6T172</accession>
<dbReference type="EC" id="2.7.1.130" evidence="1"/>
<dbReference type="EMBL" id="CP000269">
    <property type="protein sequence ID" value="ABR88742.1"/>
    <property type="molecule type" value="Genomic_DNA"/>
</dbReference>
<dbReference type="RefSeq" id="WP_012080431.1">
    <property type="nucleotide sequence ID" value="NC_009659.1"/>
</dbReference>
<dbReference type="SMR" id="A6T172"/>
<dbReference type="STRING" id="375286.mma_2579"/>
<dbReference type="KEGG" id="mms:mma_2579"/>
<dbReference type="eggNOG" id="COG1663">
    <property type="taxonomic scope" value="Bacteria"/>
</dbReference>
<dbReference type="HOGENOM" id="CLU_038816_2_0_4"/>
<dbReference type="OrthoDB" id="9766423at2"/>
<dbReference type="UniPathway" id="UPA00359">
    <property type="reaction ID" value="UER00482"/>
</dbReference>
<dbReference type="Proteomes" id="UP000006388">
    <property type="component" value="Chromosome"/>
</dbReference>
<dbReference type="GO" id="GO:0005886">
    <property type="term" value="C:plasma membrane"/>
    <property type="evidence" value="ECO:0007669"/>
    <property type="project" value="TreeGrafter"/>
</dbReference>
<dbReference type="GO" id="GO:0005524">
    <property type="term" value="F:ATP binding"/>
    <property type="evidence" value="ECO:0007669"/>
    <property type="project" value="UniProtKB-UniRule"/>
</dbReference>
<dbReference type="GO" id="GO:0009029">
    <property type="term" value="F:tetraacyldisaccharide 4'-kinase activity"/>
    <property type="evidence" value="ECO:0007669"/>
    <property type="project" value="UniProtKB-UniRule"/>
</dbReference>
<dbReference type="GO" id="GO:0009245">
    <property type="term" value="P:lipid A biosynthetic process"/>
    <property type="evidence" value="ECO:0007669"/>
    <property type="project" value="UniProtKB-UniRule"/>
</dbReference>
<dbReference type="GO" id="GO:0009244">
    <property type="term" value="P:lipopolysaccharide core region biosynthetic process"/>
    <property type="evidence" value="ECO:0007669"/>
    <property type="project" value="TreeGrafter"/>
</dbReference>
<dbReference type="HAMAP" id="MF_00409">
    <property type="entry name" value="LpxK"/>
    <property type="match status" value="1"/>
</dbReference>
<dbReference type="InterPro" id="IPR003758">
    <property type="entry name" value="LpxK"/>
</dbReference>
<dbReference type="InterPro" id="IPR027417">
    <property type="entry name" value="P-loop_NTPase"/>
</dbReference>
<dbReference type="NCBIfam" id="TIGR00682">
    <property type="entry name" value="lpxK"/>
    <property type="match status" value="1"/>
</dbReference>
<dbReference type="PANTHER" id="PTHR42724">
    <property type="entry name" value="TETRAACYLDISACCHARIDE 4'-KINASE"/>
    <property type="match status" value="1"/>
</dbReference>
<dbReference type="PANTHER" id="PTHR42724:SF1">
    <property type="entry name" value="TETRAACYLDISACCHARIDE 4'-KINASE, MITOCHONDRIAL-RELATED"/>
    <property type="match status" value="1"/>
</dbReference>
<dbReference type="Pfam" id="PF02606">
    <property type="entry name" value="LpxK"/>
    <property type="match status" value="1"/>
</dbReference>
<dbReference type="SUPFAM" id="SSF52540">
    <property type="entry name" value="P-loop containing nucleoside triphosphate hydrolases"/>
    <property type="match status" value="1"/>
</dbReference>
<evidence type="ECO:0000255" key="1">
    <source>
        <dbReference type="HAMAP-Rule" id="MF_00409"/>
    </source>
</evidence>
<keyword id="KW-0067">ATP-binding</keyword>
<keyword id="KW-0418">Kinase</keyword>
<keyword id="KW-0441">Lipid A biosynthesis</keyword>
<keyword id="KW-0444">Lipid biosynthesis</keyword>
<keyword id="KW-0443">Lipid metabolism</keyword>
<keyword id="KW-0547">Nucleotide-binding</keyword>
<keyword id="KW-0808">Transferase</keyword>